<keyword id="KW-0963">Cytoplasm</keyword>
<keyword id="KW-0227">DNA damage</keyword>
<keyword id="KW-0234">DNA repair</keyword>
<keyword id="KW-0378">Hydrolase</keyword>
<keyword id="KW-0479">Metal-binding</keyword>
<keyword id="KW-1185">Reference proteome</keyword>
<keyword id="KW-0346">Stress response</keyword>
<keyword id="KW-0862">Zinc</keyword>
<protein>
    <recommendedName>
        <fullName evidence="1">Protein/nucleic acid deglycase HchA</fullName>
        <ecNumber evidence="1">3.1.2.-</ecNumber>
        <ecNumber evidence="1">3.5.1.-</ecNumber>
        <ecNumber evidence="1">3.5.1.124</ecNumber>
    </recommendedName>
    <alternativeName>
        <fullName evidence="1">Maillard deglycase</fullName>
    </alternativeName>
</protein>
<reference key="1">
    <citation type="journal article" date="2007" name="J. Bacteriol.">
        <title>The genome sequence of avian pathogenic Escherichia coli strain O1:K1:H7 shares strong similarities with human extraintestinal pathogenic E. coli genomes.</title>
        <authorList>
            <person name="Johnson T.J."/>
            <person name="Kariyawasam S."/>
            <person name="Wannemuehler Y."/>
            <person name="Mangiamele P."/>
            <person name="Johnson S.J."/>
            <person name="Doetkott C."/>
            <person name="Skyberg J.A."/>
            <person name="Lynne A.M."/>
            <person name="Johnson J.R."/>
            <person name="Nolan L.K."/>
        </authorList>
    </citation>
    <scope>NUCLEOTIDE SEQUENCE [LARGE SCALE GENOMIC DNA]</scope>
</reference>
<name>HCHA_ECOK1</name>
<proteinExistence type="inferred from homology"/>
<evidence type="ECO:0000255" key="1">
    <source>
        <dbReference type="HAMAP-Rule" id="MF_01046"/>
    </source>
</evidence>
<accession>A1ACB2</accession>
<organism>
    <name type="scientific">Escherichia coli O1:K1 / APEC</name>
    <dbReference type="NCBI Taxonomy" id="405955"/>
    <lineage>
        <taxon>Bacteria</taxon>
        <taxon>Pseudomonadati</taxon>
        <taxon>Pseudomonadota</taxon>
        <taxon>Gammaproteobacteria</taxon>
        <taxon>Enterobacterales</taxon>
        <taxon>Enterobacteriaceae</taxon>
        <taxon>Escherichia</taxon>
    </lineage>
</organism>
<dbReference type="EC" id="3.1.2.-" evidence="1"/>
<dbReference type="EC" id="3.5.1.-" evidence="1"/>
<dbReference type="EC" id="3.5.1.124" evidence="1"/>
<dbReference type="EMBL" id="CP000468">
    <property type="protein sequence ID" value="ABJ01302.1"/>
    <property type="molecule type" value="Genomic_DNA"/>
</dbReference>
<dbReference type="RefSeq" id="WP_000218046.1">
    <property type="nucleotide sequence ID" value="NZ_CADILS010000098.1"/>
</dbReference>
<dbReference type="SMR" id="A1ACB2"/>
<dbReference type="MEROPS" id="C56.006"/>
<dbReference type="KEGG" id="ecv:APECO1_1002"/>
<dbReference type="HOGENOM" id="CLU_066933_0_0_6"/>
<dbReference type="Proteomes" id="UP000008216">
    <property type="component" value="Chromosome"/>
</dbReference>
<dbReference type="GO" id="GO:0005737">
    <property type="term" value="C:cytoplasm"/>
    <property type="evidence" value="ECO:0007669"/>
    <property type="project" value="UniProtKB-SubCell"/>
</dbReference>
<dbReference type="GO" id="GO:0019172">
    <property type="term" value="F:glyoxalase III activity"/>
    <property type="evidence" value="ECO:0007669"/>
    <property type="project" value="TreeGrafter"/>
</dbReference>
<dbReference type="GO" id="GO:0036524">
    <property type="term" value="F:protein deglycase activity"/>
    <property type="evidence" value="ECO:0007669"/>
    <property type="project" value="UniProtKB-UniRule"/>
</dbReference>
<dbReference type="GO" id="GO:0016790">
    <property type="term" value="F:thiolester hydrolase activity"/>
    <property type="evidence" value="ECO:0007669"/>
    <property type="project" value="UniProtKB-UniRule"/>
</dbReference>
<dbReference type="GO" id="GO:0008270">
    <property type="term" value="F:zinc ion binding"/>
    <property type="evidence" value="ECO:0007669"/>
    <property type="project" value="UniProtKB-UniRule"/>
</dbReference>
<dbReference type="GO" id="GO:0006281">
    <property type="term" value="P:DNA repair"/>
    <property type="evidence" value="ECO:0007669"/>
    <property type="project" value="UniProtKB-UniRule"/>
</dbReference>
<dbReference type="GO" id="GO:0019243">
    <property type="term" value="P:methylglyoxal catabolic process to D-lactate via S-lactoyl-glutathione"/>
    <property type="evidence" value="ECO:0007669"/>
    <property type="project" value="TreeGrafter"/>
</dbReference>
<dbReference type="GO" id="GO:0030091">
    <property type="term" value="P:protein repair"/>
    <property type="evidence" value="ECO:0007669"/>
    <property type="project" value="UniProtKB-UniRule"/>
</dbReference>
<dbReference type="Gene3D" id="3.40.50.880">
    <property type="match status" value="1"/>
</dbReference>
<dbReference type="HAMAP" id="MF_01046">
    <property type="entry name" value="Deglycase_HchA"/>
    <property type="match status" value="1"/>
</dbReference>
<dbReference type="InterPro" id="IPR029062">
    <property type="entry name" value="Class_I_gatase-like"/>
</dbReference>
<dbReference type="InterPro" id="IPR017283">
    <property type="entry name" value="HchA"/>
</dbReference>
<dbReference type="InterPro" id="IPR050325">
    <property type="entry name" value="Prot/Nucl_acid_deglycase"/>
</dbReference>
<dbReference type="NCBIfam" id="NF003168">
    <property type="entry name" value="PRK04155.1"/>
    <property type="match status" value="1"/>
</dbReference>
<dbReference type="PANTHER" id="PTHR48094">
    <property type="entry name" value="PROTEIN/NUCLEIC ACID DEGLYCASE DJ-1-RELATED"/>
    <property type="match status" value="1"/>
</dbReference>
<dbReference type="PANTHER" id="PTHR48094:SF20">
    <property type="entry name" value="PROTEIN_NUCLEIC ACID DEGLYCASE 1"/>
    <property type="match status" value="1"/>
</dbReference>
<dbReference type="PIRSF" id="PIRSF037798">
    <property type="entry name" value="Chaperone_HchA"/>
    <property type="match status" value="1"/>
</dbReference>
<dbReference type="SUPFAM" id="SSF52317">
    <property type="entry name" value="Class I glutamine amidotransferase-like"/>
    <property type="match status" value="1"/>
</dbReference>
<feature type="chain" id="PRO_1000064276" description="Protein/nucleic acid deglycase HchA">
    <location>
        <begin position="1"/>
        <end position="283"/>
    </location>
</feature>
<feature type="active site" description="Nucleophile" evidence="1">
    <location>
        <position position="185"/>
    </location>
</feature>
<feature type="binding site" evidence="1">
    <location>
        <position position="86"/>
    </location>
    <ligand>
        <name>Zn(2+)</name>
        <dbReference type="ChEBI" id="CHEBI:29105"/>
    </ligand>
</feature>
<feature type="binding site" evidence="1">
    <location>
        <position position="91"/>
    </location>
    <ligand>
        <name>Zn(2+)</name>
        <dbReference type="ChEBI" id="CHEBI:29105"/>
    </ligand>
</feature>
<feature type="binding site" evidence="1">
    <location>
        <position position="123"/>
    </location>
    <ligand>
        <name>Zn(2+)</name>
        <dbReference type="ChEBI" id="CHEBI:29105"/>
    </ligand>
</feature>
<gene>
    <name evidence="1" type="primary">hchA</name>
    <name type="ordered locus">Ecok1_18080</name>
    <name type="ORF">APECO1_1002</name>
</gene>
<sequence length="283" mass="31205">MTVQKSKNPQVDIAEDNAFFPSEYSLSQYTSPVSDLDGVDYPKPYRGKHKILVIAADERYLPTDNGKLFSTGNHPIETLLPLYHLHAAGFEFEVATISGLMTKFEYWAMPHKDEKVMPFFEQHKSLFRNPKKLADVVASLNADSEYAAIFVPGGHGALIGLPESEDVAAALQWAIENDRFVISLCHGPAAFLALRHGDNPLNGYSICAFPDAADKQTPEIGYMPGHLTWYFGEELKKMGMNIINDDITGRVHKDRKVLTGDSPFAANALGKLAAQEMLAAYAG</sequence>
<comment type="function">
    <text evidence="1">Protein and nucleotide deglycase that catalyzes the deglycation of the Maillard adducts formed between amino groups of proteins or nucleotides and reactive carbonyl groups of glyoxals. Thus, functions as a protein deglycase that repairs methylglyoxal- and glyoxal-glycated proteins, and releases repaired proteins and lactate or glycolate, respectively. Deglycates cysteine, arginine and lysine residues in proteins, and thus reactivates these proteins by reversing glycation by glyoxals. Acts on early glycation intermediates (hemithioacetals and aminocarbinols), preventing the formation of Schiff bases and advanced glycation endproducts (AGE). Also functions as a nucleotide deglycase able to repair glycated guanine in the free nucleotide pool (GTP, GDP, GMP, dGTP) and in DNA and RNA. Is thus involved in a major nucleotide repair system named guanine glycation repair (GG repair), dedicated to reversing methylglyoxal and glyoxal damage via nucleotide sanitization and direct nucleic acid repair. Plays an important role in protecting cells from carbonyl stress.</text>
</comment>
<comment type="catalytic activity">
    <reaction evidence="1">
        <text>N(omega)-(1-hydroxy-2-oxopropyl)-L-arginyl-[protein] + H2O = lactate + L-arginyl-[protein] + H(+)</text>
        <dbReference type="Rhea" id="RHEA:49548"/>
        <dbReference type="Rhea" id="RHEA-COMP:10532"/>
        <dbReference type="Rhea" id="RHEA-COMP:12428"/>
        <dbReference type="ChEBI" id="CHEBI:15377"/>
        <dbReference type="ChEBI" id="CHEBI:15378"/>
        <dbReference type="ChEBI" id="CHEBI:24996"/>
        <dbReference type="ChEBI" id="CHEBI:29965"/>
        <dbReference type="ChEBI" id="CHEBI:131708"/>
        <dbReference type="EC" id="3.5.1.124"/>
    </reaction>
</comment>
<comment type="catalytic activity">
    <reaction evidence="1">
        <text>N(6)-(1-hydroxy-2-oxopropyl)-L-lysyl-[protein] + H2O = lactate + L-lysyl-[protein] + H(+)</text>
        <dbReference type="Rhea" id="RHEA:49552"/>
        <dbReference type="Rhea" id="RHEA-COMP:9752"/>
        <dbReference type="Rhea" id="RHEA-COMP:12429"/>
        <dbReference type="ChEBI" id="CHEBI:15377"/>
        <dbReference type="ChEBI" id="CHEBI:15378"/>
        <dbReference type="ChEBI" id="CHEBI:24996"/>
        <dbReference type="ChEBI" id="CHEBI:29969"/>
        <dbReference type="ChEBI" id="CHEBI:131709"/>
        <dbReference type="EC" id="3.5.1.124"/>
    </reaction>
</comment>
<comment type="catalytic activity">
    <reaction evidence="1">
        <text>S-(1-hydroxy-2-oxopropyl)-L-cysteinyl-[protein] + H2O = lactate + L-cysteinyl-[protein] + H(+)</text>
        <dbReference type="Rhea" id="RHEA:49556"/>
        <dbReference type="Rhea" id="RHEA-COMP:10131"/>
        <dbReference type="Rhea" id="RHEA-COMP:12430"/>
        <dbReference type="ChEBI" id="CHEBI:15377"/>
        <dbReference type="ChEBI" id="CHEBI:15378"/>
        <dbReference type="ChEBI" id="CHEBI:24996"/>
        <dbReference type="ChEBI" id="CHEBI:29950"/>
        <dbReference type="ChEBI" id="CHEBI:131710"/>
        <dbReference type="EC" id="3.5.1.124"/>
    </reaction>
</comment>
<comment type="catalytic activity">
    <reaction evidence="1">
        <text>N(omega)-(1-hydroxy-2-oxoethyl)-L-arginyl-[protein] + H2O = L-arginyl-[protein] + glycolate + H(+)</text>
        <dbReference type="Rhea" id="RHEA:57188"/>
        <dbReference type="Rhea" id="RHEA-COMP:10532"/>
        <dbReference type="Rhea" id="RHEA-COMP:14844"/>
        <dbReference type="ChEBI" id="CHEBI:15377"/>
        <dbReference type="ChEBI" id="CHEBI:15378"/>
        <dbReference type="ChEBI" id="CHEBI:29805"/>
        <dbReference type="ChEBI" id="CHEBI:29965"/>
        <dbReference type="ChEBI" id="CHEBI:141553"/>
        <dbReference type="EC" id="3.5.1.124"/>
    </reaction>
</comment>
<comment type="catalytic activity">
    <reaction evidence="1">
        <text>N(6)-(1-hydroxy-2-oxoethyl)-L-lysyl-[protein] + H2O = glycolate + L-lysyl-[protein] + H(+)</text>
        <dbReference type="Rhea" id="RHEA:57192"/>
        <dbReference type="Rhea" id="RHEA-COMP:9752"/>
        <dbReference type="Rhea" id="RHEA-COMP:14845"/>
        <dbReference type="ChEBI" id="CHEBI:15377"/>
        <dbReference type="ChEBI" id="CHEBI:15378"/>
        <dbReference type="ChEBI" id="CHEBI:29805"/>
        <dbReference type="ChEBI" id="CHEBI:29969"/>
        <dbReference type="ChEBI" id="CHEBI:141554"/>
        <dbReference type="EC" id="3.5.1.124"/>
    </reaction>
</comment>
<comment type="catalytic activity">
    <reaction evidence="1">
        <text>S-(1-hydroxy-2-oxoethyl)-L-cysteinyl-[protein] + H2O = glycolate + L-cysteinyl-[protein] + H(+)</text>
        <dbReference type="Rhea" id="RHEA:57196"/>
        <dbReference type="Rhea" id="RHEA-COMP:10131"/>
        <dbReference type="Rhea" id="RHEA-COMP:14846"/>
        <dbReference type="ChEBI" id="CHEBI:15377"/>
        <dbReference type="ChEBI" id="CHEBI:15378"/>
        <dbReference type="ChEBI" id="CHEBI:29805"/>
        <dbReference type="ChEBI" id="CHEBI:29950"/>
        <dbReference type="ChEBI" id="CHEBI:141555"/>
        <dbReference type="EC" id="3.5.1.124"/>
    </reaction>
</comment>
<comment type="catalytic activity">
    <reaction evidence="1">
        <text>N(2)-(1-hydroxy-2-oxopropyl)-dGTP + H2O = lactate + dGTP + H(+)</text>
        <dbReference type="Rhea" id="RHEA:57244"/>
        <dbReference type="ChEBI" id="CHEBI:15377"/>
        <dbReference type="ChEBI" id="CHEBI:15378"/>
        <dbReference type="ChEBI" id="CHEBI:24996"/>
        <dbReference type="ChEBI" id="CHEBI:61429"/>
        <dbReference type="ChEBI" id="CHEBI:141569"/>
    </reaction>
</comment>
<comment type="catalytic activity">
    <reaction evidence="1">
        <text>N(2)-(1-hydroxy-2-oxopropyl)-GTP + H2O = lactate + GTP + H(+)</text>
        <dbReference type="Rhea" id="RHEA:57256"/>
        <dbReference type="ChEBI" id="CHEBI:15377"/>
        <dbReference type="ChEBI" id="CHEBI:15378"/>
        <dbReference type="ChEBI" id="CHEBI:24996"/>
        <dbReference type="ChEBI" id="CHEBI:37565"/>
        <dbReference type="ChEBI" id="CHEBI:141570"/>
    </reaction>
</comment>
<comment type="catalytic activity">
    <reaction evidence="1">
        <text>N(2)-(1-hydroxy-2-oxopropyl)-GDP + H2O = lactate + GDP + H(+)</text>
        <dbReference type="Rhea" id="RHEA:57260"/>
        <dbReference type="ChEBI" id="CHEBI:15377"/>
        <dbReference type="ChEBI" id="CHEBI:15378"/>
        <dbReference type="ChEBI" id="CHEBI:24996"/>
        <dbReference type="ChEBI" id="CHEBI:58189"/>
        <dbReference type="ChEBI" id="CHEBI:141573"/>
    </reaction>
</comment>
<comment type="catalytic activity">
    <reaction evidence="1">
        <text>N(2)-(1-hydroxy-2-oxopropyl)-GMP + H2O = lactate + GMP + H(+)</text>
        <dbReference type="Rhea" id="RHEA:57268"/>
        <dbReference type="ChEBI" id="CHEBI:15377"/>
        <dbReference type="ChEBI" id="CHEBI:15378"/>
        <dbReference type="ChEBI" id="CHEBI:24996"/>
        <dbReference type="ChEBI" id="CHEBI:58115"/>
        <dbReference type="ChEBI" id="CHEBI:141575"/>
    </reaction>
</comment>
<comment type="catalytic activity">
    <reaction evidence="1">
        <text>N(2)-(1-hydroxy-2-oxoethyl)-dGTP + H2O = dGTP + glycolate + H(+)</text>
        <dbReference type="Rhea" id="RHEA:57248"/>
        <dbReference type="ChEBI" id="CHEBI:15377"/>
        <dbReference type="ChEBI" id="CHEBI:15378"/>
        <dbReference type="ChEBI" id="CHEBI:29805"/>
        <dbReference type="ChEBI" id="CHEBI:61429"/>
        <dbReference type="ChEBI" id="CHEBI:141572"/>
    </reaction>
</comment>
<comment type="catalytic activity">
    <reaction evidence="1">
        <text>N(2)-(1-hydroxy-2-oxoethyl)-GTP + H2O = glycolate + GTP + H(+)</text>
        <dbReference type="Rhea" id="RHEA:57252"/>
        <dbReference type="ChEBI" id="CHEBI:15377"/>
        <dbReference type="ChEBI" id="CHEBI:15378"/>
        <dbReference type="ChEBI" id="CHEBI:29805"/>
        <dbReference type="ChEBI" id="CHEBI:37565"/>
        <dbReference type="ChEBI" id="CHEBI:141571"/>
    </reaction>
</comment>
<comment type="catalytic activity">
    <reaction evidence="1">
        <text>N(2)-(1-hydroxy-2-oxoethyl)-GDP + H2O = glycolate + GDP + H(+)</text>
        <dbReference type="Rhea" id="RHEA:57264"/>
        <dbReference type="ChEBI" id="CHEBI:15377"/>
        <dbReference type="ChEBI" id="CHEBI:15378"/>
        <dbReference type="ChEBI" id="CHEBI:29805"/>
        <dbReference type="ChEBI" id="CHEBI:58189"/>
        <dbReference type="ChEBI" id="CHEBI:141574"/>
    </reaction>
</comment>
<comment type="catalytic activity">
    <reaction evidence="1">
        <text>N(2)-(1-hydroxy-2-oxoethyl)-GMP + H2O = glycolate + GMP + H(+)</text>
        <dbReference type="Rhea" id="RHEA:57304"/>
        <dbReference type="ChEBI" id="CHEBI:15377"/>
        <dbReference type="ChEBI" id="CHEBI:15378"/>
        <dbReference type="ChEBI" id="CHEBI:29805"/>
        <dbReference type="ChEBI" id="CHEBI:58115"/>
        <dbReference type="ChEBI" id="CHEBI:141576"/>
    </reaction>
</comment>
<comment type="catalytic activity">
    <reaction evidence="1">
        <text>an N(2)-(1-hydroxy-2-oxopropyl)-guanosine in RNA + H2O = a guanosine in RNA + lactate + H(+)</text>
        <dbReference type="Rhea" id="RHEA:57288"/>
        <dbReference type="Rhea" id="RHEA-COMP:14855"/>
        <dbReference type="Rhea" id="RHEA-COMP:14858"/>
        <dbReference type="ChEBI" id="CHEBI:15377"/>
        <dbReference type="ChEBI" id="CHEBI:15378"/>
        <dbReference type="ChEBI" id="CHEBI:24996"/>
        <dbReference type="ChEBI" id="CHEBI:74269"/>
        <dbReference type="ChEBI" id="CHEBI:141580"/>
    </reaction>
</comment>
<comment type="catalytic activity">
    <reaction evidence="1">
        <text>an N(2)-(1-hydroxy-2-oxopropyl)-2'-deoxyguanosine in DNA + H2O = a 2'-deoxyguanosine in DNA + lactate + H(+)</text>
        <dbReference type="Rhea" id="RHEA:57300"/>
        <dbReference type="Rhea" id="RHEA-COMP:11367"/>
        <dbReference type="Rhea" id="RHEA-COMP:14856"/>
        <dbReference type="ChEBI" id="CHEBI:15377"/>
        <dbReference type="ChEBI" id="CHEBI:15378"/>
        <dbReference type="ChEBI" id="CHEBI:24996"/>
        <dbReference type="ChEBI" id="CHEBI:85445"/>
        <dbReference type="ChEBI" id="CHEBI:141578"/>
    </reaction>
</comment>
<comment type="catalytic activity">
    <reaction evidence="1">
        <text>an N(2)-(1-hydroxy-2-oxoethyl)-guanosine in RNA + H2O = a guanosine in RNA + glycolate + H(+)</text>
        <dbReference type="Rhea" id="RHEA:57292"/>
        <dbReference type="Rhea" id="RHEA-COMP:14855"/>
        <dbReference type="Rhea" id="RHEA-COMP:14859"/>
        <dbReference type="ChEBI" id="CHEBI:15377"/>
        <dbReference type="ChEBI" id="CHEBI:15378"/>
        <dbReference type="ChEBI" id="CHEBI:29805"/>
        <dbReference type="ChEBI" id="CHEBI:74269"/>
        <dbReference type="ChEBI" id="CHEBI:141581"/>
    </reaction>
</comment>
<comment type="catalytic activity">
    <reaction evidence="1">
        <text>an N(2)-(1-hydroxy-2-oxoethyl)-2'-deoxyguanosine in DNA + H2O = a 2'-deoxyguanosine in DNA + glycolate + H(+)</text>
        <dbReference type="Rhea" id="RHEA:57296"/>
        <dbReference type="Rhea" id="RHEA-COMP:11367"/>
        <dbReference type="Rhea" id="RHEA-COMP:14857"/>
        <dbReference type="ChEBI" id="CHEBI:15377"/>
        <dbReference type="ChEBI" id="CHEBI:15378"/>
        <dbReference type="ChEBI" id="CHEBI:29805"/>
        <dbReference type="ChEBI" id="CHEBI:85445"/>
        <dbReference type="ChEBI" id="CHEBI:141579"/>
    </reaction>
</comment>
<comment type="subunit">
    <text evidence="1">Homodimer.</text>
</comment>
<comment type="subcellular location">
    <subcellularLocation>
        <location evidence="1">Cytoplasm</location>
    </subcellularLocation>
</comment>
<comment type="induction">
    <text evidence="1">By heat shock.</text>
</comment>
<comment type="similarity">
    <text evidence="1">Belongs to the peptidase C56 family. HchA subfamily.</text>
</comment>